<protein>
    <recommendedName>
        <fullName evidence="1">Aspartate carbamoyltransferase regulatory chain</fullName>
    </recommendedName>
</protein>
<keyword id="KW-0479">Metal-binding</keyword>
<keyword id="KW-0665">Pyrimidine biosynthesis</keyword>
<keyword id="KW-0862">Zinc</keyword>
<feature type="chain" id="PRO_1000193109" description="Aspartate carbamoyltransferase regulatory chain">
    <location>
        <begin position="1"/>
        <end position="153"/>
    </location>
</feature>
<feature type="binding site" evidence="1">
    <location>
        <position position="109"/>
    </location>
    <ligand>
        <name>Zn(2+)</name>
        <dbReference type="ChEBI" id="CHEBI:29105"/>
    </ligand>
</feature>
<feature type="binding site" evidence="1">
    <location>
        <position position="114"/>
    </location>
    <ligand>
        <name>Zn(2+)</name>
        <dbReference type="ChEBI" id="CHEBI:29105"/>
    </ligand>
</feature>
<feature type="binding site" evidence="1">
    <location>
        <position position="138"/>
    </location>
    <ligand>
        <name>Zn(2+)</name>
        <dbReference type="ChEBI" id="CHEBI:29105"/>
    </ligand>
</feature>
<feature type="binding site" evidence="1">
    <location>
        <position position="141"/>
    </location>
    <ligand>
        <name>Zn(2+)</name>
        <dbReference type="ChEBI" id="CHEBI:29105"/>
    </ligand>
</feature>
<accession>B7NGH7</accession>
<sequence length="153" mass="17121">MTHDNKLQVEAIKRGTVIDHIPAQIGFKLLSLFKLTETDQRITIGLNLPSGEMGRKDLIKIENTFLSEDQVDQLALYAPQATVNRIDNYEVVGKSRPSLPERIDNVLVCPNSNCISHAEPVSSSFAVRKRANDIALKCKYCEKEFSHNVVLAN</sequence>
<comment type="function">
    <text evidence="1">Involved in allosteric regulation of aspartate carbamoyltransferase.</text>
</comment>
<comment type="cofactor">
    <cofactor evidence="1">
        <name>Zn(2+)</name>
        <dbReference type="ChEBI" id="CHEBI:29105"/>
    </cofactor>
    <text evidence="1">Binds 1 zinc ion per subunit.</text>
</comment>
<comment type="subunit">
    <text evidence="1">Contains catalytic and regulatory chains.</text>
</comment>
<comment type="similarity">
    <text evidence="1">Belongs to the PyrI family.</text>
</comment>
<gene>
    <name evidence="1" type="primary">pyrI</name>
    <name type="ordered locus">ECUMN_4777</name>
</gene>
<reference key="1">
    <citation type="journal article" date="2009" name="PLoS Genet.">
        <title>Organised genome dynamics in the Escherichia coli species results in highly diverse adaptive paths.</title>
        <authorList>
            <person name="Touchon M."/>
            <person name="Hoede C."/>
            <person name="Tenaillon O."/>
            <person name="Barbe V."/>
            <person name="Baeriswyl S."/>
            <person name="Bidet P."/>
            <person name="Bingen E."/>
            <person name="Bonacorsi S."/>
            <person name="Bouchier C."/>
            <person name="Bouvet O."/>
            <person name="Calteau A."/>
            <person name="Chiapello H."/>
            <person name="Clermont O."/>
            <person name="Cruveiller S."/>
            <person name="Danchin A."/>
            <person name="Diard M."/>
            <person name="Dossat C."/>
            <person name="Karoui M.E."/>
            <person name="Frapy E."/>
            <person name="Garry L."/>
            <person name="Ghigo J.M."/>
            <person name="Gilles A.M."/>
            <person name="Johnson J."/>
            <person name="Le Bouguenec C."/>
            <person name="Lescat M."/>
            <person name="Mangenot S."/>
            <person name="Martinez-Jehanne V."/>
            <person name="Matic I."/>
            <person name="Nassif X."/>
            <person name="Oztas S."/>
            <person name="Petit M.A."/>
            <person name="Pichon C."/>
            <person name="Rouy Z."/>
            <person name="Ruf C.S."/>
            <person name="Schneider D."/>
            <person name="Tourret J."/>
            <person name="Vacherie B."/>
            <person name="Vallenet D."/>
            <person name="Medigue C."/>
            <person name="Rocha E.P.C."/>
            <person name="Denamur E."/>
        </authorList>
    </citation>
    <scope>NUCLEOTIDE SEQUENCE [LARGE SCALE GENOMIC DNA]</scope>
    <source>
        <strain>UMN026 / ExPEC</strain>
    </source>
</reference>
<name>PYRI_ECOLU</name>
<dbReference type="EMBL" id="CU928163">
    <property type="protein sequence ID" value="CAR15889.1"/>
    <property type="molecule type" value="Genomic_DNA"/>
</dbReference>
<dbReference type="RefSeq" id="WP_000148581.1">
    <property type="nucleotide sequence ID" value="NC_011751.1"/>
</dbReference>
<dbReference type="RefSeq" id="YP_002415372.1">
    <property type="nucleotide sequence ID" value="NC_011751.1"/>
</dbReference>
<dbReference type="SMR" id="B7NGH7"/>
<dbReference type="STRING" id="585056.ECUMN_4777"/>
<dbReference type="GeneID" id="93777580"/>
<dbReference type="KEGG" id="eum:ECUMN_4777"/>
<dbReference type="PATRIC" id="fig|585056.7.peg.4943"/>
<dbReference type="HOGENOM" id="CLU_128576_0_0_6"/>
<dbReference type="Proteomes" id="UP000007097">
    <property type="component" value="Chromosome"/>
</dbReference>
<dbReference type="GO" id="GO:0009347">
    <property type="term" value="C:aspartate carbamoyltransferase complex"/>
    <property type="evidence" value="ECO:0007669"/>
    <property type="project" value="InterPro"/>
</dbReference>
<dbReference type="GO" id="GO:0046872">
    <property type="term" value="F:metal ion binding"/>
    <property type="evidence" value="ECO:0007669"/>
    <property type="project" value="UniProtKB-KW"/>
</dbReference>
<dbReference type="GO" id="GO:0006207">
    <property type="term" value="P:'de novo' pyrimidine nucleobase biosynthetic process"/>
    <property type="evidence" value="ECO:0007669"/>
    <property type="project" value="InterPro"/>
</dbReference>
<dbReference type="GO" id="GO:0006221">
    <property type="term" value="P:pyrimidine nucleotide biosynthetic process"/>
    <property type="evidence" value="ECO:0007669"/>
    <property type="project" value="UniProtKB-UniRule"/>
</dbReference>
<dbReference type="FunFam" id="2.30.30.20:FF:000001">
    <property type="entry name" value="Aspartate carbamoyltransferase regulatory chain"/>
    <property type="match status" value="1"/>
</dbReference>
<dbReference type="FunFam" id="3.30.70.140:FF:000001">
    <property type="entry name" value="Aspartate carbamoyltransferase regulatory chain"/>
    <property type="match status" value="1"/>
</dbReference>
<dbReference type="Gene3D" id="2.30.30.20">
    <property type="entry name" value="Aspartate carbamoyltransferase regulatory subunit, C-terminal domain"/>
    <property type="match status" value="1"/>
</dbReference>
<dbReference type="Gene3D" id="3.30.70.140">
    <property type="entry name" value="Aspartate carbamoyltransferase regulatory subunit, N-terminal domain"/>
    <property type="match status" value="1"/>
</dbReference>
<dbReference type="HAMAP" id="MF_00002">
    <property type="entry name" value="Asp_carb_tr_reg"/>
    <property type="match status" value="1"/>
</dbReference>
<dbReference type="InterPro" id="IPR020545">
    <property type="entry name" value="Asp_carbamoyltransf_reg_N"/>
</dbReference>
<dbReference type="InterPro" id="IPR002801">
    <property type="entry name" value="Asp_carbamoylTrfase_reg"/>
</dbReference>
<dbReference type="InterPro" id="IPR020542">
    <property type="entry name" value="Asp_carbamoyltrfase_reg_C"/>
</dbReference>
<dbReference type="InterPro" id="IPR036792">
    <property type="entry name" value="Asp_carbatrfase_reg_C_sf"/>
</dbReference>
<dbReference type="InterPro" id="IPR036793">
    <property type="entry name" value="Asp_carbatrfase_reg_N_sf"/>
</dbReference>
<dbReference type="NCBIfam" id="TIGR00240">
    <property type="entry name" value="ATCase_reg"/>
    <property type="match status" value="1"/>
</dbReference>
<dbReference type="PANTHER" id="PTHR35805">
    <property type="entry name" value="ASPARTATE CARBAMOYLTRANSFERASE REGULATORY CHAIN"/>
    <property type="match status" value="1"/>
</dbReference>
<dbReference type="PANTHER" id="PTHR35805:SF1">
    <property type="entry name" value="ASPARTATE CARBAMOYLTRANSFERASE REGULATORY CHAIN"/>
    <property type="match status" value="1"/>
</dbReference>
<dbReference type="Pfam" id="PF01948">
    <property type="entry name" value="PyrI"/>
    <property type="match status" value="1"/>
</dbReference>
<dbReference type="Pfam" id="PF02748">
    <property type="entry name" value="PyrI_C"/>
    <property type="match status" value="1"/>
</dbReference>
<dbReference type="SUPFAM" id="SSF57825">
    <property type="entry name" value="Aspartate carbamoyltransferase, Regulatory-chain, C-terminal domain"/>
    <property type="match status" value="1"/>
</dbReference>
<dbReference type="SUPFAM" id="SSF54893">
    <property type="entry name" value="Aspartate carbamoyltransferase, Regulatory-chain, N-terminal domain"/>
    <property type="match status" value="1"/>
</dbReference>
<organism>
    <name type="scientific">Escherichia coli O17:K52:H18 (strain UMN026 / ExPEC)</name>
    <dbReference type="NCBI Taxonomy" id="585056"/>
    <lineage>
        <taxon>Bacteria</taxon>
        <taxon>Pseudomonadati</taxon>
        <taxon>Pseudomonadota</taxon>
        <taxon>Gammaproteobacteria</taxon>
        <taxon>Enterobacterales</taxon>
        <taxon>Enterobacteriaceae</taxon>
        <taxon>Escherichia</taxon>
    </lineage>
</organism>
<proteinExistence type="inferred from homology"/>
<evidence type="ECO:0000255" key="1">
    <source>
        <dbReference type="HAMAP-Rule" id="MF_00002"/>
    </source>
</evidence>